<reference key="1">
    <citation type="submission" date="2008-01" db="EMBL/GenBank/DDBJ databases">
        <title>Complete sequence of chromosome of Caulobacter sp. K31.</title>
        <authorList>
            <consortium name="US DOE Joint Genome Institute"/>
            <person name="Copeland A."/>
            <person name="Lucas S."/>
            <person name="Lapidus A."/>
            <person name="Barry K."/>
            <person name="Glavina del Rio T."/>
            <person name="Dalin E."/>
            <person name="Tice H."/>
            <person name="Pitluck S."/>
            <person name="Bruce D."/>
            <person name="Goodwin L."/>
            <person name="Thompson L.S."/>
            <person name="Brettin T."/>
            <person name="Detter J.C."/>
            <person name="Han C."/>
            <person name="Schmutz J."/>
            <person name="Larimer F."/>
            <person name="Land M."/>
            <person name="Hauser L."/>
            <person name="Kyrpides N."/>
            <person name="Kim E."/>
            <person name="Stephens C."/>
            <person name="Richardson P."/>
        </authorList>
    </citation>
    <scope>NUCLEOTIDE SEQUENCE [LARGE SCALE GENOMIC DNA]</scope>
    <source>
        <strain>K31</strain>
    </source>
</reference>
<organism>
    <name type="scientific">Caulobacter sp. (strain K31)</name>
    <dbReference type="NCBI Taxonomy" id="366602"/>
    <lineage>
        <taxon>Bacteria</taxon>
        <taxon>Pseudomonadati</taxon>
        <taxon>Pseudomonadota</taxon>
        <taxon>Alphaproteobacteria</taxon>
        <taxon>Caulobacterales</taxon>
        <taxon>Caulobacteraceae</taxon>
        <taxon>Caulobacter</taxon>
    </lineage>
</organism>
<dbReference type="EC" id="2.7.1.130" evidence="1"/>
<dbReference type="EMBL" id="CP000927">
    <property type="protein sequence ID" value="ABZ73662.1"/>
    <property type="molecule type" value="Genomic_DNA"/>
</dbReference>
<dbReference type="SMR" id="B0T114"/>
<dbReference type="STRING" id="366602.Caul_4542"/>
<dbReference type="KEGG" id="cak:Caul_4542"/>
<dbReference type="eggNOG" id="COG1663">
    <property type="taxonomic scope" value="Bacteria"/>
</dbReference>
<dbReference type="HOGENOM" id="CLU_038816_0_0_5"/>
<dbReference type="OrthoDB" id="9766423at2"/>
<dbReference type="UniPathway" id="UPA00359">
    <property type="reaction ID" value="UER00482"/>
</dbReference>
<dbReference type="GO" id="GO:0005886">
    <property type="term" value="C:plasma membrane"/>
    <property type="evidence" value="ECO:0007669"/>
    <property type="project" value="TreeGrafter"/>
</dbReference>
<dbReference type="GO" id="GO:0005524">
    <property type="term" value="F:ATP binding"/>
    <property type="evidence" value="ECO:0007669"/>
    <property type="project" value="UniProtKB-UniRule"/>
</dbReference>
<dbReference type="GO" id="GO:0009029">
    <property type="term" value="F:tetraacyldisaccharide 4'-kinase activity"/>
    <property type="evidence" value="ECO:0007669"/>
    <property type="project" value="UniProtKB-UniRule"/>
</dbReference>
<dbReference type="GO" id="GO:0009245">
    <property type="term" value="P:lipid A biosynthetic process"/>
    <property type="evidence" value="ECO:0007669"/>
    <property type="project" value="UniProtKB-UniRule"/>
</dbReference>
<dbReference type="GO" id="GO:0009244">
    <property type="term" value="P:lipopolysaccharide core region biosynthetic process"/>
    <property type="evidence" value="ECO:0007669"/>
    <property type="project" value="TreeGrafter"/>
</dbReference>
<dbReference type="HAMAP" id="MF_00409">
    <property type="entry name" value="LpxK"/>
    <property type="match status" value="1"/>
</dbReference>
<dbReference type="InterPro" id="IPR003758">
    <property type="entry name" value="LpxK"/>
</dbReference>
<dbReference type="InterPro" id="IPR027417">
    <property type="entry name" value="P-loop_NTPase"/>
</dbReference>
<dbReference type="NCBIfam" id="TIGR00682">
    <property type="entry name" value="lpxK"/>
    <property type="match status" value="1"/>
</dbReference>
<dbReference type="PANTHER" id="PTHR42724">
    <property type="entry name" value="TETRAACYLDISACCHARIDE 4'-KINASE"/>
    <property type="match status" value="1"/>
</dbReference>
<dbReference type="PANTHER" id="PTHR42724:SF1">
    <property type="entry name" value="TETRAACYLDISACCHARIDE 4'-KINASE, MITOCHONDRIAL-RELATED"/>
    <property type="match status" value="1"/>
</dbReference>
<dbReference type="Pfam" id="PF02606">
    <property type="entry name" value="LpxK"/>
    <property type="match status" value="1"/>
</dbReference>
<dbReference type="SUPFAM" id="SSF52540">
    <property type="entry name" value="P-loop containing nucleoside triphosphate hydrolases"/>
    <property type="match status" value="1"/>
</dbReference>
<keyword id="KW-0067">ATP-binding</keyword>
<keyword id="KW-0418">Kinase</keyword>
<keyword id="KW-0441">Lipid A biosynthesis</keyword>
<keyword id="KW-0444">Lipid biosynthesis</keyword>
<keyword id="KW-0443">Lipid metabolism</keyword>
<keyword id="KW-0547">Nucleotide-binding</keyword>
<keyword id="KW-0808">Transferase</keyword>
<comment type="function">
    <text evidence="1">Transfers the gamma-phosphate of ATP to the 4'-position of a tetraacyldisaccharide 1-phosphate intermediate (termed DS-1-P) to form tetraacyldisaccharide 1,4'-bis-phosphate (lipid IVA).</text>
</comment>
<comment type="catalytic activity">
    <reaction evidence="1">
        <text>a lipid A disaccharide + ATP = a lipid IVA + ADP + H(+)</text>
        <dbReference type="Rhea" id="RHEA:67840"/>
        <dbReference type="ChEBI" id="CHEBI:15378"/>
        <dbReference type="ChEBI" id="CHEBI:30616"/>
        <dbReference type="ChEBI" id="CHEBI:176343"/>
        <dbReference type="ChEBI" id="CHEBI:176425"/>
        <dbReference type="ChEBI" id="CHEBI:456216"/>
        <dbReference type="EC" id="2.7.1.130"/>
    </reaction>
</comment>
<comment type="pathway">
    <text evidence="1">Glycolipid biosynthesis; lipid IV(A) biosynthesis; lipid IV(A) from (3R)-3-hydroxytetradecanoyl-[acyl-carrier-protein] and UDP-N-acetyl-alpha-D-glucosamine: step 6/6.</text>
</comment>
<comment type="similarity">
    <text evidence="1">Belongs to the LpxK family.</text>
</comment>
<sequence length="335" mass="36717">MKLATPRWWYLREGAPSPITRALLTPLSWIWAAQTARRIARTTPRGADCAVICVGNFTVGGVGKTPIVRELLLTLTKRGRRAHGLARGYGGKLKGPVRVEPSRHTVAEVGDEPLMLAQDFPMWVSRDRVLGARKAAASGAEVVVMDDGHQNPDLRKTLSLVVVDGETREDEWPFGDGRVFPAGPMREPLNVSLGRTDAVIVLLPADLPEADPRLLALFGDTPVLIARLEPAAPPPKGRQVGFAGIGKPWKVERALKAAGCHLVDFAPYPDHGQYDEATLNFLWERAQTYSAGLVTTEKDWVRLPQAWRDRVTPWPVRARFEDEGALGALLESVGL</sequence>
<proteinExistence type="inferred from homology"/>
<evidence type="ECO:0000255" key="1">
    <source>
        <dbReference type="HAMAP-Rule" id="MF_00409"/>
    </source>
</evidence>
<name>LPXK_CAUSK</name>
<accession>B0T114</accession>
<gene>
    <name evidence="1" type="primary">lpxK</name>
    <name type="ordered locus">Caul_4542</name>
</gene>
<feature type="chain" id="PRO_1000080463" description="Tetraacyldisaccharide 4'-kinase">
    <location>
        <begin position="1"/>
        <end position="335"/>
    </location>
</feature>
<feature type="binding site" evidence="1">
    <location>
        <begin position="58"/>
        <end position="65"/>
    </location>
    <ligand>
        <name>ATP</name>
        <dbReference type="ChEBI" id="CHEBI:30616"/>
    </ligand>
</feature>
<protein>
    <recommendedName>
        <fullName evidence="1">Tetraacyldisaccharide 4'-kinase</fullName>
        <ecNumber evidence="1">2.7.1.130</ecNumber>
    </recommendedName>
    <alternativeName>
        <fullName evidence="1">Lipid A 4'-kinase</fullName>
    </alternativeName>
</protein>